<sequence length="205" mass="23340">MGQKTHPVGFRLGITHTHQSHWFAHQYSKILQEDHAIRQLLRDYVLKAGIARIHILRKSHQIELELHLARPGILVGRSGLGLDNLRTQLQTKWPHLTWRISLVEVSNPDANAVLLAQWLAQQLEKRIAFRRAIRQAMARAQKVGVKGIKIQVSGRLNGAEIARSEWVRHGQIPLQTLRAPINYAIANAYTTYGVIGVKVWINPKH</sequence>
<geneLocation type="chloroplast"/>
<accession>Q85FV7</accession>
<name>RR3_CYAM1</name>
<gene>
    <name type="primary">rps3</name>
</gene>
<keyword id="KW-0150">Chloroplast</keyword>
<keyword id="KW-0934">Plastid</keyword>
<keyword id="KW-1185">Reference proteome</keyword>
<keyword id="KW-0687">Ribonucleoprotein</keyword>
<keyword id="KW-0689">Ribosomal protein</keyword>
<keyword id="KW-0694">RNA-binding</keyword>
<keyword id="KW-0699">rRNA-binding</keyword>
<proteinExistence type="inferred from homology"/>
<protein>
    <recommendedName>
        <fullName evidence="2">Small ribosomal subunit protein uS3c</fullName>
    </recommendedName>
    <alternativeName>
        <fullName>30S ribosomal protein S3, chloroplastic</fullName>
    </alternativeName>
</protein>
<feature type="chain" id="PRO_0000130278" description="Small ribosomal subunit protein uS3c">
    <location>
        <begin position="1"/>
        <end position="205"/>
    </location>
</feature>
<feature type="domain" description="KH type-2">
    <location>
        <begin position="37"/>
        <end position="106"/>
    </location>
</feature>
<evidence type="ECO:0000250" key="1"/>
<evidence type="ECO:0000305" key="2"/>
<organism>
    <name type="scientific">Cyanidioschyzon merolae (strain NIES-3377 / 10D)</name>
    <name type="common">Unicellular red alga</name>
    <dbReference type="NCBI Taxonomy" id="280699"/>
    <lineage>
        <taxon>Eukaryota</taxon>
        <taxon>Rhodophyta</taxon>
        <taxon>Bangiophyceae</taxon>
        <taxon>Cyanidiales</taxon>
        <taxon>Cyanidiaceae</taxon>
        <taxon>Cyanidioschyzon</taxon>
    </lineage>
</organism>
<comment type="subunit">
    <text evidence="1">Part of the 30S ribosomal subunit.</text>
</comment>
<comment type="subcellular location">
    <subcellularLocation>
        <location>Plastid</location>
        <location>Chloroplast</location>
    </subcellularLocation>
</comment>
<comment type="similarity">
    <text evidence="2">Belongs to the universal ribosomal protein uS3 family.</text>
</comment>
<dbReference type="EMBL" id="AB002583">
    <property type="protein sequence ID" value="BAC76237.1"/>
    <property type="molecule type" value="Genomic_DNA"/>
</dbReference>
<dbReference type="RefSeq" id="NP_849075.1">
    <property type="nucleotide sequence ID" value="NC_004799.1"/>
</dbReference>
<dbReference type="SMR" id="Q85FV7"/>
<dbReference type="STRING" id="280699.Q85FV7"/>
<dbReference type="EnsemblPlants" id="CMV170CT">
    <property type="protein sequence ID" value="CMV170CT"/>
    <property type="gene ID" value="CMV170C"/>
</dbReference>
<dbReference type="GeneID" id="845010"/>
<dbReference type="Gramene" id="CMV170CT">
    <property type="protein sequence ID" value="CMV170CT"/>
    <property type="gene ID" value="CMV170C"/>
</dbReference>
<dbReference type="KEGG" id="cme:CymeCp143"/>
<dbReference type="eggNOG" id="ENOG502QV63">
    <property type="taxonomic scope" value="Eukaryota"/>
</dbReference>
<dbReference type="HOGENOM" id="CLU_058591_0_2_1"/>
<dbReference type="Proteomes" id="UP000007014">
    <property type="component" value="Chloroplast"/>
</dbReference>
<dbReference type="GO" id="GO:0009507">
    <property type="term" value="C:chloroplast"/>
    <property type="evidence" value="ECO:0007669"/>
    <property type="project" value="UniProtKB-SubCell"/>
</dbReference>
<dbReference type="GO" id="GO:0022627">
    <property type="term" value="C:cytosolic small ribosomal subunit"/>
    <property type="evidence" value="ECO:0007669"/>
    <property type="project" value="TreeGrafter"/>
</dbReference>
<dbReference type="GO" id="GO:0003729">
    <property type="term" value="F:mRNA binding"/>
    <property type="evidence" value="ECO:0007669"/>
    <property type="project" value="EnsemblPlants"/>
</dbReference>
<dbReference type="GO" id="GO:0019843">
    <property type="term" value="F:rRNA binding"/>
    <property type="evidence" value="ECO:0007669"/>
    <property type="project" value="UniProtKB-UniRule"/>
</dbReference>
<dbReference type="GO" id="GO:0003735">
    <property type="term" value="F:structural constituent of ribosome"/>
    <property type="evidence" value="ECO:0007669"/>
    <property type="project" value="InterPro"/>
</dbReference>
<dbReference type="GO" id="GO:0006412">
    <property type="term" value="P:translation"/>
    <property type="evidence" value="ECO:0007669"/>
    <property type="project" value="UniProtKB-UniRule"/>
</dbReference>
<dbReference type="CDD" id="cd02412">
    <property type="entry name" value="KH-II_30S_S3"/>
    <property type="match status" value="1"/>
</dbReference>
<dbReference type="FunFam" id="3.30.300.20:FF:000001">
    <property type="entry name" value="30S ribosomal protein S3"/>
    <property type="match status" value="1"/>
</dbReference>
<dbReference type="Gene3D" id="3.30.300.20">
    <property type="match status" value="1"/>
</dbReference>
<dbReference type="Gene3D" id="3.30.1140.32">
    <property type="entry name" value="Ribosomal protein S3, C-terminal domain"/>
    <property type="match status" value="1"/>
</dbReference>
<dbReference type="HAMAP" id="MF_01309_B">
    <property type="entry name" value="Ribosomal_uS3_B"/>
    <property type="match status" value="1"/>
</dbReference>
<dbReference type="InterPro" id="IPR015946">
    <property type="entry name" value="KH_dom-like_a/b"/>
</dbReference>
<dbReference type="InterPro" id="IPR004044">
    <property type="entry name" value="KH_dom_type_2"/>
</dbReference>
<dbReference type="InterPro" id="IPR009019">
    <property type="entry name" value="KH_sf_prok-type"/>
</dbReference>
<dbReference type="InterPro" id="IPR036419">
    <property type="entry name" value="Ribosomal_S3_C_sf"/>
</dbReference>
<dbReference type="InterPro" id="IPR005704">
    <property type="entry name" value="Ribosomal_uS3_bac-typ"/>
</dbReference>
<dbReference type="InterPro" id="IPR001351">
    <property type="entry name" value="Ribosomal_uS3_C"/>
</dbReference>
<dbReference type="InterPro" id="IPR018280">
    <property type="entry name" value="Ribosomal_uS3_CS"/>
</dbReference>
<dbReference type="NCBIfam" id="TIGR01009">
    <property type="entry name" value="rpsC_bact"/>
    <property type="match status" value="1"/>
</dbReference>
<dbReference type="PANTHER" id="PTHR11760">
    <property type="entry name" value="30S/40S RIBOSOMAL PROTEIN S3"/>
    <property type="match status" value="1"/>
</dbReference>
<dbReference type="PANTHER" id="PTHR11760:SF19">
    <property type="entry name" value="SMALL RIBOSOMAL SUBUNIT PROTEIN US3C"/>
    <property type="match status" value="1"/>
</dbReference>
<dbReference type="Pfam" id="PF07650">
    <property type="entry name" value="KH_2"/>
    <property type="match status" value="1"/>
</dbReference>
<dbReference type="Pfam" id="PF00189">
    <property type="entry name" value="Ribosomal_S3_C"/>
    <property type="match status" value="1"/>
</dbReference>
<dbReference type="SUPFAM" id="SSF54814">
    <property type="entry name" value="Prokaryotic type KH domain (KH-domain type II)"/>
    <property type="match status" value="1"/>
</dbReference>
<dbReference type="SUPFAM" id="SSF54821">
    <property type="entry name" value="Ribosomal protein S3 C-terminal domain"/>
    <property type="match status" value="1"/>
</dbReference>
<dbReference type="PROSITE" id="PS50823">
    <property type="entry name" value="KH_TYPE_2"/>
    <property type="match status" value="1"/>
</dbReference>
<dbReference type="PROSITE" id="PS00548">
    <property type="entry name" value="RIBOSOMAL_S3"/>
    <property type="match status" value="1"/>
</dbReference>
<reference key="1">
    <citation type="journal article" date="2003" name="DNA Res.">
        <title>Complete sequence and analysis of the plastid genome of the unicellular red alga Cyanidioschyzon merolae.</title>
        <authorList>
            <person name="Ohta N."/>
            <person name="Matsuzaki M."/>
            <person name="Misumi O."/>
            <person name="Miyagishima S.-Y."/>
            <person name="Nozaki H."/>
            <person name="Tanaka K."/>
            <person name="Shin-i T."/>
            <person name="Kohara Y."/>
            <person name="Kuroiwa T."/>
        </authorList>
    </citation>
    <scope>NUCLEOTIDE SEQUENCE [LARGE SCALE GENOMIC DNA]</scope>
    <source>
        <strain>NIES-3377 / 10D</strain>
    </source>
</reference>